<accession>Q4A7Y3</accession>
<proteinExistence type="inferred from homology"/>
<organism>
    <name type="scientific">Mesomycoplasma hyopneumoniae (strain 7448)</name>
    <name type="common">Mycoplasma hyopneumoniae</name>
    <dbReference type="NCBI Taxonomy" id="262722"/>
    <lineage>
        <taxon>Bacteria</taxon>
        <taxon>Bacillati</taxon>
        <taxon>Mycoplasmatota</taxon>
        <taxon>Mycoplasmoidales</taxon>
        <taxon>Metamycoplasmataceae</taxon>
        <taxon>Mesomycoplasma</taxon>
    </lineage>
</organism>
<comment type="function">
    <text evidence="1">Catalyzes the attachment of proline to tRNA(Pro) in a two-step reaction: proline is first activated by ATP to form Pro-AMP and then transferred to the acceptor end of tRNA(Pro).</text>
</comment>
<comment type="catalytic activity">
    <reaction evidence="1">
        <text>tRNA(Pro) + L-proline + ATP = L-prolyl-tRNA(Pro) + AMP + diphosphate</text>
        <dbReference type="Rhea" id="RHEA:14305"/>
        <dbReference type="Rhea" id="RHEA-COMP:9700"/>
        <dbReference type="Rhea" id="RHEA-COMP:9702"/>
        <dbReference type="ChEBI" id="CHEBI:30616"/>
        <dbReference type="ChEBI" id="CHEBI:33019"/>
        <dbReference type="ChEBI" id="CHEBI:60039"/>
        <dbReference type="ChEBI" id="CHEBI:78442"/>
        <dbReference type="ChEBI" id="CHEBI:78532"/>
        <dbReference type="ChEBI" id="CHEBI:456215"/>
        <dbReference type="EC" id="6.1.1.15"/>
    </reaction>
</comment>
<comment type="subunit">
    <text evidence="1">Homodimer.</text>
</comment>
<comment type="subcellular location">
    <subcellularLocation>
        <location evidence="1">Cytoplasm</location>
    </subcellularLocation>
</comment>
<comment type="domain">
    <text evidence="1">Consists of three domains: the N-terminal catalytic domain, the anticodon-binding domain and the C-terminal extension.</text>
</comment>
<comment type="similarity">
    <text evidence="1">Belongs to the class-II aminoacyl-tRNA synthetase family. ProS type 3 subfamily.</text>
</comment>
<keyword id="KW-0030">Aminoacyl-tRNA synthetase</keyword>
<keyword id="KW-0067">ATP-binding</keyword>
<keyword id="KW-0963">Cytoplasm</keyword>
<keyword id="KW-0436">Ligase</keyword>
<keyword id="KW-0547">Nucleotide-binding</keyword>
<keyword id="KW-0648">Protein biosynthesis</keyword>
<feature type="chain" id="PRO_0000249135" description="Proline--tRNA ligase">
    <location>
        <begin position="1"/>
        <end position="479"/>
    </location>
</feature>
<dbReference type="EC" id="6.1.1.15" evidence="1"/>
<dbReference type="EMBL" id="AE017244">
    <property type="protein sequence ID" value="AAZ53756.1"/>
    <property type="molecule type" value="Genomic_DNA"/>
</dbReference>
<dbReference type="RefSeq" id="WP_011290213.1">
    <property type="nucleotide sequence ID" value="NC_007332.1"/>
</dbReference>
<dbReference type="SMR" id="Q4A7Y3"/>
<dbReference type="KEGG" id="mhp:MHP7448_0385"/>
<dbReference type="HOGENOM" id="CLU_001882_4_2_14"/>
<dbReference type="Proteomes" id="UP000000553">
    <property type="component" value="Chromosome"/>
</dbReference>
<dbReference type="GO" id="GO:0017101">
    <property type="term" value="C:aminoacyl-tRNA synthetase multienzyme complex"/>
    <property type="evidence" value="ECO:0007669"/>
    <property type="project" value="TreeGrafter"/>
</dbReference>
<dbReference type="GO" id="GO:0005737">
    <property type="term" value="C:cytoplasm"/>
    <property type="evidence" value="ECO:0007669"/>
    <property type="project" value="UniProtKB-SubCell"/>
</dbReference>
<dbReference type="GO" id="GO:0005524">
    <property type="term" value="F:ATP binding"/>
    <property type="evidence" value="ECO:0007669"/>
    <property type="project" value="UniProtKB-UniRule"/>
</dbReference>
<dbReference type="GO" id="GO:0004827">
    <property type="term" value="F:proline-tRNA ligase activity"/>
    <property type="evidence" value="ECO:0007669"/>
    <property type="project" value="UniProtKB-UniRule"/>
</dbReference>
<dbReference type="GO" id="GO:0006433">
    <property type="term" value="P:prolyl-tRNA aminoacylation"/>
    <property type="evidence" value="ECO:0007669"/>
    <property type="project" value="UniProtKB-UniRule"/>
</dbReference>
<dbReference type="CDD" id="cd00778">
    <property type="entry name" value="ProRS_core_arch_euk"/>
    <property type="match status" value="1"/>
</dbReference>
<dbReference type="Gene3D" id="3.40.50.800">
    <property type="entry name" value="Anticodon-binding domain"/>
    <property type="match status" value="1"/>
</dbReference>
<dbReference type="Gene3D" id="3.30.930.10">
    <property type="entry name" value="Bira Bifunctional Protein, Domain 2"/>
    <property type="match status" value="1"/>
</dbReference>
<dbReference type="Gene3D" id="3.30.110.30">
    <property type="entry name" value="C-terminal domain of ProRS"/>
    <property type="match status" value="1"/>
</dbReference>
<dbReference type="HAMAP" id="MF_01571">
    <property type="entry name" value="Pro_tRNA_synth_type3"/>
    <property type="match status" value="1"/>
</dbReference>
<dbReference type="InterPro" id="IPR002314">
    <property type="entry name" value="aa-tRNA-synt_IIb"/>
</dbReference>
<dbReference type="InterPro" id="IPR006195">
    <property type="entry name" value="aa-tRNA-synth_II"/>
</dbReference>
<dbReference type="InterPro" id="IPR045864">
    <property type="entry name" value="aa-tRNA-synth_II/BPL/LPL"/>
</dbReference>
<dbReference type="InterPro" id="IPR004154">
    <property type="entry name" value="Anticodon-bd"/>
</dbReference>
<dbReference type="InterPro" id="IPR036621">
    <property type="entry name" value="Anticodon-bd_dom_sf"/>
</dbReference>
<dbReference type="InterPro" id="IPR002316">
    <property type="entry name" value="Pro-tRNA-ligase_IIa"/>
</dbReference>
<dbReference type="InterPro" id="IPR004499">
    <property type="entry name" value="Pro-tRNA-ligase_IIa_arc-type"/>
</dbReference>
<dbReference type="InterPro" id="IPR016061">
    <property type="entry name" value="Pro-tRNA_ligase_II_C"/>
</dbReference>
<dbReference type="InterPro" id="IPR017449">
    <property type="entry name" value="Pro-tRNA_synth_II"/>
</dbReference>
<dbReference type="InterPro" id="IPR033721">
    <property type="entry name" value="ProRS_core_arch_euk"/>
</dbReference>
<dbReference type="NCBIfam" id="TIGR00408">
    <property type="entry name" value="proS_fam_I"/>
    <property type="match status" value="1"/>
</dbReference>
<dbReference type="PANTHER" id="PTHR43382:SF2">
    <property type="entry name" value="BIFUNCTIONAL GLUTAMATE_PROLINE--TRNA LIGASE"/>
    <property type="match status" value="1"/>
</dbReference>
<dbReference type="PANTHER" id="PTHR43382">
    <property type="entry name" value="PROLYL-TRNA SYNTHETASE"/>
    <property type="match status" value="1"/>
</dbReference>
<dbReference type="Pfam" id="PF03129">
    <property type="entry name" value="HGTP_anticodon"/>
    <property type="match status" value="1"/>
</dbReference>
<dbReference type="Pfam" id="PF09180">
    <property type="entry name" value="ProRS-C_1"/>
    <property type="match status" value="1"/>
</dbReference>
<dbReference type="Pfam" id="PF00587">
    <property type="entry name" value="tRNA-synt_2b"/>
    <property type="match status" value="1"/>
</dbReference>
<dbReference type="PRINTS" id="PR01046">
    <property type="entry name" value="TRNASYNTHPRO"/>
</dbReference>
<dbReference type="SMART" id="SM00946">
    <property type="entry name" value="ProRS-C_1"/>
    <property type="match status" value="1"/>
</dbReference>
<dbReference type="SUPFAM" id="SSF64586">
    <property type="entry name" value="C-terminal domain of ProRS"/>
    <property type="match status" value="1"/>
</dbReference>
<dbReference type="SUPFAM" id="SSF52954">
    <property type="entry name" value="Class II aaRS ABD-related"/>
    <property type="match status" value="1"/>
</dbReference>
<dbReference type="SUPFAM" id="SSF55681">
    <property type="entry name" value="Class II aaRS and biotin synthetases"/>
    <property type="match status" value="1"/>
</dbReference>
<dbReference type="PROSITE" id="PS50862">
    <property type="entry name" value="AA_TRNA_LIGASE_II"/>
    <property type="match status" value="1"/>
</dbReference>
<reference key="1">
    <citation type="journal article" date="2005" name="J. Bacteriol.">
        <title>Swine and poultry pathogens: the complete genome sequences of two strains of Mycoplasma hyopneumoniae and a strain of Mycoplasma synoviae.</title>
        <authorList>
            <person name="Vasconcelos A.T.R."/>
            <person name="Ferreira H.B."/>
            <person name="Bizarro C.V."/>
            <person name="Bonatto S.L."/>
            <person name="Carvalho M.O."/>
            <person name="Pinto P.M."/>
            <person name="Almeida D.F."/>
            <person name="Almeida L.G.P."/>
            <person name="Almeida R."/>
            <person name="Alves-Junior L."/>
            <person name="Assuncao E.N."/>
            <person name="Azevedo V.A.C."/>
            <person name="Bogo M.R."/>
            <person name="Brigido M.M."/>
            <person name="Brocchi M."/>
            <person name="Burity H.A."/>
            <person name="Camargo A.A."/>
            <person name="Camargo S.S."/>
            <person name="Carepo M.S."/>
            <person name="Carraro D.M."/>
            <person name="de Mattos Cascardo J.C."/>
            <person name="Castro L.A."/>
            <person name="Cavalcanti G."/>
            <person name="Chemale G."/>
            <person name="Collevatti R.G."/>
            <person name="Cunha C.W."/>
            <person name="Dallagiovanna B."/>
            <person name="Dambros B.P."/>
            <person name="Dellagostin O.A."/>
            <person name="Falcao C."/>
            <person name="Fantinatti-Garboggini F."/>
            <person name="Felipe M.S.S."/>
            <person name="Fiorentin L."/>
            <person name="Franco G.R."/>
            <person name="Freitas N.S.A."/>
            <person name="Frias D."/>
            <person name="Grangeiro T.B."/>
            <person name="Grisard E.C."/>
            <person name="Guimaraes C.T."/>
            <person name="Hungria M."/>
            <person name="Jardim S.N."/>
            <person name="Krieger M.A."/>
            <person name="Laurino J.P."/>
            <person name="Lima L.F.A."/>
            <person name="Lopes M.I."/>
            <person name="Loreto E.L.S."/>
            <person name="Madeira H.M.F."/>
            <person name="Manfio G.P."/>
            <person name="Maranhao A.Q."/>
            <person name="Martinkovics C.T."/>
            <person name="Medeiros S.R.B."/>
            <person name="Moreira M.A.M."/>
            <person name="Neiva M."/>
            <person name="Ramalho-Neto C.E."/>
            <person name="Nicolas M.F."/>
            <person name="Oliveira S.C."/>
            <person name="Paixao R.F.C."/>
            <person name="Pedrosa F.O."/>
            <person name="Pena S.D.J."/>
            <person name="Pereira M."/>
            <person name="Pereira-Ferrari L."/>
            <person name="Piffer I."/>
            <person name="Pinto L.S."/>
            <person name="Potrich D.P."/>
            <person name="Salim A.C.M."/>
            <person name="Santos F.R."/>
            <person name="Schmitt R."/>
            <person name="Schneider M.P.C."/>
            <person name="Schrank A."/>
            <person name="Schrank I.S."/>
            <person name="Schuck A.F."/>
            <person name="Seuanez H.N."/>
            <person name="Silva D.W."/>
            <person name="Silva R."/>
            <person name="Silva S.C."/>
            <person name="Soares C.M.A."/>
            <person name="Souza K.R.L."/>
            <person name="Souza R.C."/>
            <person name="Staats C.C."/>
            <person name="Steffens M.B.R."/>
            <person name="Teixeira S.M.R."/>
            <person name="Urmenyi T.P."/>
            <person name="Vainstein M.H."/>
            <person name="Zuccherato L.W."/>
            <person name="Simpson A.J.G."/>
            <person name="Zaha A."/>
        </authorList>
    </citation>
    <scope>NUCLEOTIDE SEQUENCE [LARGE SCALE GENOMIC DNA]</scope>
    <source>
        <strain>7448</strain>
    </source>
</reference>
<sequence length="479" mass="55515">MKKPEKITSRTADFAKWYVDVITQADLMNYGPIKGTIYFKPLGYKIWENIVKIVNAYFVKQKIENVYFPLLIPQDFIEKEKKHIEGFAPELLTITKVGDKNLVENIYIRPTSELLFADYFKAEIAKNNILPIKLNQWSQVLRWEKTTNPFLRNTEFLWQEGHTIHASKVEANQFAKKIARFYKYFLENYLAIPVISGQKTEREKFAGAVNTYTVEAMMQNFRALQSATAHFLGQNFAKNFEIFYKNKENKSQIPFQTSWGLSTRLIGAIVMVHSDDNGLIFPPKIAPIQVDILEFFSKKNQEVKIFAKRIAKILKNAKIAYKIDDTDQQIGYKINNSEVHGAPIRIEIGPNEVKNNQICLVRRDNHQKFFFNIDLLKEKCRKILEQIQADLFKKAKIRLLENTVFVNSINEFEQAIKNNKFVIAPFSESPEREQEIQEKTGATARCILPKNSFFALPQAGNSIFSGEKTNKFVLFAKSY</sequence>
<evidence type="ECO:0000255" key="1">
    <source>
        <dbReference type="HAMAP-Rule" id="MF_01571"/>
    </source>
</evidence>
<name>SYP_MESH7</name>
<gene>
    <name evidence="1" type="primary">proS</name>
    <name type="ordered locus">MHP7448_0385</name>
</gene>
<protein>
    <recommendedName>
        <fullName evidence="1">Proline--tRNA ligase</fullName>
        <ecNumber evidence="1">6.1.1.15</ecNumber>
    </recommendedName>
    <alternativeName>
        <fullName evidence="1">Prolyl-tRNA synthetase</fullName>
        <shortName evidence="1">ProRS</shortName>
    </alternativeName>
</protein>